<sequence length="1116" mass="126242">MQMAQFLSLVRGDSIESPREITSPSNLISESGSNGWLIRFFDSSFFCEWIAVSYLYKHQHSGVRDYLCNRMYTLPLSGIESYLFQICYLMVHKPSPSLDKFVIDICAKSLKIALKVHWFLLAELEDSDDNEGISRIQEKCQIAATLVGEWSPLMRPHNEPSTPGSKVLNKFLSSKQKLFSLTLSPPTQKSLLFSPTSGSNLQDDGSQLSADDNKIFKRLIPSPKVRDALLFRKSADKEDEECEKDGFFKRLLRDSRGEDDEQRSNSEGFFKRLLKDNKSEEEEISNNSEGFFKRLRSSKGDEEELTSSSDGFFKRLLRDNKGDEEELGANSEGFFKKLLRDSKNEDEEPNANTEGFFKKLFHESKNEDDKVSNAVDDEEKDGFLKKLFKEKFDEKRNGNERNETDETVYTDETSGEDNGREGFFKKLFKEKFEDKPNIGKADDGNESEDDESSEFSLFRRLFRRHPEDVKTTLPSENCSNGGFVESSPGTENFFRKLFRDRDRSVEDSELFGSKKYKEKCPGSPKPQNNTPSKKPPLPNNTAAQFRKGSYHESLEFVHALCETSYDLVDIFPIEDRKTALRESIAEINSHLAQAETTGGICFPMGRGVYRVVNIPEDEYVLLNSREKVPYMICVEVLKAETPCGAKTTSTSLKLSKGGIPLANGDAFLHKPPPWAYPLSTAQEVYRNSADRMSLSTVEAIDQAMTHKSEVKLVNACLSVETHSNSNTKSVSSGVTGVLRTGLESDLEWVRLVLTADPGLRMESITDPKTPRRKEHRRVSSIVAYEEVRAAAAKGEAPPGLPLKGAGQDSSDAQPMANGGMLKAGDALSGEFWEGKRLRIRKDSIYGNLPGWDLRSIIVKSGDDCRQEHLAVQLISHFFDIFQEAGLPLWLRPYEVLVTSSYTALIETIPDTASIHSIKSRYPNITSLRDFFDAKFKENSPSFKLAQRNFVESMAGYSLVCYLLQIKDRHNGNLLMDEEGHIIHIDFGFMLSNSPGGVNFESAPFKLTRELLEVMDSDAEGLPSEFFDYFKVLCIQGFLTCRKHAERIILLVEMLQDSGFPCFKGGPRTIQNLRKRFHLSLTEEQCVSLVLSLISSSLDAWRTRQYDYYQRVLNGIR</sequence>
<accession>Q0WPX9</accession>
<accession>Q9FY80</accession>
<reference key="1">
    <citation type="journal article" date="2000" name="Nature">
        <title>Sequence and analysis of chromosome 5 of the plant Arabidopsis thaliana.</title>
        <authorList>
            <person name="Tabata S."/>
            <person name="Kaneko T."/>
            <person name="Nakamura Y."/>
            <person name="Kotani H."/>
            <person name="Kato T."/>
            <person name="Asamizu E."/>
            <person name="Miyajima N."/>
            <person name="Sasamoto S."/>
            <person name="Kimura T."/>
            <person name="Hosouchi T."/>
            <person name="Kawashima K."/>
            <person name="Kohara M."/>
            <person name="Matsumoto M."/>
            <person name="Matsuno A."/>
            <person name="Muraki A."/>
            <person name="Nakayama S."/>
            <person name="Nakazaki N."/>
            <person name="Naruo K."/>
            <person name="Okumura S."/>
            <person name="Shinpo S."/>
            <person name="Takeuchi C."/>
            <person name="Wada T."/>
            <person name="Watanabe A."/>
            <person name="Yamada M."/>
            <person name="Yasuda M."/>
            <person name="Sato S."/>
            <person name="de la Bastide M."/>
            <person name="Huang E."/>
            <person name="Spiegel L."/>
            <person name="Gnoj L."/>
            <person name="O'Shaughnessy A."/>
            <person name="Preston R."/>
            <person name="Habermann K."/>
            <person name="Murray J."/>
            <person name="Johnson D."/>
            <person name="Rohlfing T."/>
            <person name="Nelson J."/>
            <person name="Stoneking T."/>
            <person name="Pepin K."/>
            <person name="Spieth J."/>
            <person name="Sekhon M."/>
            <person name="Armstrong J."/>
            <person name="Becker M."/>
            <person name="Belter E."/>
            <person name="Cordum H."/>
            <person name="Cordes M."/>
            <person name="Courtney L."/>
            <person name="Courtney W."/>
            <person name="Dante M."/>
            <person name="Du H."/>
            <person name="Edwards J."/>
            <person name="Fryman J."/>
            <person name="Haakensen B."/>
            <person name="Lamar E."/>
            <person name="Latreille P."/>
            <person name="Leonard S."/>
            <person name="Meyer R."/>
            <person name="Mulvaney E."/>
            <person name="Ozersky P."/>
            <person name="Riley A."/>
            <person name="Strowmatt C."/>
            <person name="Wagner-McPherson C."/>
            <person name="Wollam A."/>
            <person name="Yoakum M."/>
            <person name="Bell M."/>
            <person name="Dedhia N."/>
            <person name="Parnell L."/>
            <person name="Shah R."/>
            <person name="Rodriguez M."/>
            <person name="Hoon See L."/>
            <person name="Vil D."/>
            <person name="Baker J."/>
            <person name="Kirchoff K."/>
            <person name="Toth K."/>
            <person name="King L."/>
            <person name="Bahret A."/>
            <person name="Miller B."/>
            <person name="Marra M.A."/>
            <person name="Martienssen R."/>
            <person name="McCombie W.R."/>
            <person name="Wilson R.K."/>
            <person name="Murphy G."/>
            <person name="Bancroft I."/>
            <person name="Volckaert G."/>
            <person name="Wambutt R."/>
            <person name="Duesterhoeft A."/>
            <person name="Stiekema W."/>
            <person name="Pohl T."/>
            <person name="Entian K.-D."/>
            <person name="Terryn N."/>
            <person name="Hartley N."/>
            <person name="Bent E."/>
            <person name="Johnson S."/>
            <person name="Langham S.-A."/>
            <person name="McCullagh B."/>
            <person name="Robben J."/>
            <person name="Grymonprez B."/>
            <person name="Zimmermann W."/>
            <person name="Ramsperger U."/>
            <person name="Wedler H."/>
            <person name="Balke K."/>
            <person name="Wedler E."/>
            <person name="Peters S."/>
            <person name="van Staveren M."/>
            <person name="Dirkse W."/>
            <person name="Mooijman P."/>
            <person name="Klein Lankhorst R."/>
            <person name="Weitzenegger T."/>
            <person name="Bothe G."/>
            <person name="Rose M."/>
            <person name="Hauf J."/>
            <person name="Berneiser S."/>
            <person name="Hempel S."/>
            <person name="Feldpausch M."/>
            <person name="Lamberth S."/>
            <person name="Villarroel R."/>
            <person name="Gielen J."/>
            <person name="Ardiles W."/>
            <person name="Bents O."/>
            <person name="Lemcke K."/>
            <person name="Kolesov G."/>
            <person name="Mayer K.F.X."/>
            <person name="Rudd S."/>
            <person name="Schoof H."/>
            <person name="Schueller C."/>
            <person name="Zaccaria P."/>
            <person name="Mewes H.-W."/>
            <person name="Bevan M."/>
            <person name="Fransz P.F."/>
        </authorList>
    </citation>
    <scope>NUCLEOTIDE SEQUENCE [LARGE SCALE GENOMIC DNA]</scope>
    <source>
        <strain>cv. Columbia</strain>
    </source>
</reference>
<reference key="2">
    <citation type="journal article" date="2017" name="Plant J.">
        <title>Araport11: a complete reannotation of the Arabidopsis thaliana reference genome.</title>
        <authorList>
            <person name="Cheng C.Y."/>
            <person name="Krishnakumar V."/>
            <person name="Chan A.P."/>
            <person name="Thibaud-Nissen F."/>
            <person name="Schobel S."/>
            <person name="Town C.D."/>
        </authorList>
    </citation>
    <scope>GENOME REANNOTATION</scope>
    <source>
        <strain>cv. Columbia</strain>
    </source>
</reference>
<reference key="3">
    <citation type="submission" date="2006-07" db="EMBL/GenBank/DDBJ databases">
        <title>Large-scale analysis of RIKEN Arabidopsis full-length (RAFL) cDNAs.</title>
        <authorList>
            <person name="Totoki Y."/>
            <person name="Seki M."/>
            <person name="Ishida J."/>
            <person name="Nakajima M."/>
            <person name="Enju A."/>
            <person name="Kamiya A."/>
            <person name="Narusaka M."/>
            <person name="Shin-i T."/>
            <person name="Nakagawa M."/>
            <person name="Sakamoto N."/>
            <person name="Oishi K."/>
            <person name="Kohara Y."/>
            <person name="Kobayashi M."/>
            <person name="Toyoda A."/>
            <person name="Sakaki Y."/>
            <person name="Sakurai T."/>
            <person name="Iida K."/>
            <person name="Akiyama K."/>
            <person name="Satou M."/>
            <person name="Toyoda T."/>
            <person name="Konagaya A."/>
            <person name="Carninci P."/>
            <person name="Kawai J."/>
            <person name="Hayashizaki Y."/>
            <person name="Shinozaki K."/>
        </authorList>
    </citation>
    <scope>NUCLEOTIDE SEQUENCE [LARGE SCALE MRNA]</scope>
    <source>
        <strain>cv. Columbia</strain>
    </source>
</reference>
<reference key="4">
    <citation type="journal article" date="2002" name="Plant Physiol.">
        <title>Inositol phospholipid metabolism in Arabidopsis. Characterized and putative isoforms of inositol phospholipid kinase and phosphoinositide-specific phospholipase C.</title>
        <authorList>
            <person name="Mueller-Roeber B."/>
            <person name="Pical C."/>
        </authorList>
    </citation>
    <scope>GENE FAMILY</scope>
    <scope>NOMENCLATURE</scope>
</reference>
<reference key="5">
    <citation type="journal article" date="2006" name="J. Cell Biol.">
        <title>A role for the RabA4b effector protein PI-4Kbeta1 in polarized expansion of root hair cells in Arabidopsis thaliana.</title>
        <authorList>
            <person name="Preuss M.L."/>
            <person name="Schmitz A.J."/>
            <person name="Thole J.M."/>
            <person name="Bonner H.K.S."/>
            <person name="Otegui M.S."/>
            <person name="Nielsen E."/>
        </authorList>
    </citation>
    <scope>FUNCTION</scope>
    <scope>DISRUPTION PHENOTYPE</scope>
</reference>
<reference key="6">
    <citation type="journal article" date="2009" name="Plant Cell">
        <title>The Rab GTPase RabA4d regulates pollen tube tip growth in Arabidopsis thaliana.</title>
        <authorList>
            <person name="Szumlanski A.L."/>
            <person name="Nielsen E."/>
        </authorList>
    </citation>
    <scope>FUNCTION</scope>
    <scope>DISRUPTION PHENOTYPE</scope>
</reference>
<reference key="7">
    <citation type="journal article" date="2011" name="Traffic">
        <title>Electron tomography of RabA4b- and PI-4Kbeta1-labeled trans Golgi network compartments in Arabidopsis.</title>
        <authorList>
            <person name="Kang B.H."/>
            <person name="Nielsen E."/>
            <person name="Preuss M.L."/>
            <person name="Mastronarde D."/>
            <person name="Staehelin L.A."/>
        </authorList>
    </citation>
    <scope>FUNCTION</scope>
</reference>
<reference key="8">
    <citation type="journal article" date="2012" name="Plant Cell Physiol.">
        <title>Arabidopsis type-III phosphatidylinositol 4-kinases beta1 and beta2 are upstream of the phospholipase C pathway triggered by cold exposure.</title>
        <authorList>
            <person name="Delage E."/>
            <person name="Ruelland E."/>
            <person name="Guillas I."/>
            <person name="Zachowski A."/>
            <person name="Puyaubert J."/>
        </authorList>
    </citation>
    <scope>FUNCTION</scope>
</reference>
<reference key="9">
    <citation type="journal article" date="2012" name="Plant Signal. Behav.">
        <title>Eat in or take away? How phosphatidylinositol 4-kinases feed the phospholipase C pathway with substrate.</title>
        <authorList>
            <person name="Delage E."/>
            <person name="Ruelland E."/>
            <person name="Zachowski A."/>
            <person name="Puyaubert J."/>
        </authorList>
    </citation>
    <scope>REVIEW</scope>
</reference>
<organism>
    <name type="scientific">Arabidopsis thaliana</name>
    <name type="common">Mouse-ear cress</name>
    <dbReference type="NCBI Taxonomy" id="3702"/>
    <lineage>
        <taxon>Eukaryota</taxon>
        <taxon>Viridiplantae</taxon>
        <taxon>Streptophyta</taxon>
        <taxon>Embryophyta</taxon>
        <taxon>Tracheophyta</taxon>
        <taxon>Spermatophyta</taxon>
        <taxon>Magnoliopsida</taxon>
        <taxon>eudicotyledons</taxon>
        <taxon>Gunneridae</taxon>
        <taxon>Pentapetalae</taxon>
        <taxon>rosids</taxon>
        <taxon>malvids</taxon>
        <taxon>Brassicales</taxon>
        <taxon>Brassicaceae</taxon>
        <taxon>Camelineae</taxon>
        <taxon>Arabidopsis</taxon>
    </lineage>
</organism>
<gene>
    <name type="primary">PI4KB2</name>
    <name type="synonym">PI4KBETA2</name>
    <name type="ordered locus">At5g09350</name>
    <name type="ORF">T5E8.150</name>
</gene>
<feature type="chain" id="PRO_0000398595" description="Phosphatidylinositol 4-kinase beta 2">
    <location>
        <begin position="1"/>
        <end position="1116"/>
    </location>
</feature>
<feature type="domain" description="PIK helical" evidence="4">
    <location>
        <begin position="1"/>
        <end position="143"/>
    </location>
</feature>
<feature type="repeat" description="1">
    <location>
        <begin position="210"/>
        <end position="229"/>
    </location>
</feature>
<feature type="repeat" description="2">
    <location>
        <begin position="242"/>
        <end position="261"/>
    </location>
</feature>
<feature type="repeat" description="3">
    <location>
        <begin position="264"/>
        <end position="283"/>
    </location>
</feature>
<feature type="repeat" description="4">
    <location>
        <begin position="286"/>
        <end position="304"/>
    </location>
</feature>
<feature type="repeat" description="5">
    <location>
        <begin position="307"/>
        <end position="326"/>
    </location>
</feature>
<feature type="repeat" description="6">
    <location>
        <begin position="329"/>
        <end position="348"/>
    </location>
</feature>
<feature type="repeat" description="7">
    <location>
        <begin position="351"/>
        <end position="370"/>
    </location>
</feature>
<feature type="repeat" description="8">
    <location>
        <begin position="378"/>
        <end position="396"/>
    </location>
</feature>
<feature type="repeat" description="9">
    <location>
        <begin position="418"/>
        <end position="436"/>
    </location>
</feature>
<feature type="repeat" description="10">
    <location>
        <begin position="452"/>
        <end position="470"/>
    </location>
</feature>
<feature type="repeat" description="11">
    <location>
        <begin position="488"/>
        <end position="507"/>
    </location>
</feature>
<feature type="domain" description="PI3K/PI4K catalytic" evidence="3">
    <location>
        <begin position="830"/>
        <end position="1101"/>
    </location>
</feature>
<feature type="region of interest" description="11 X 20 AA approximate repeats (PPC)">
    <location>
        <begin position="210"/>
        <end position="507"/>
    </location>
</feature>
<feature type="region of interest" description="Disordered" evidence="5">
    <location>
        <begin position="394"/>
        <end position="417"/>
    </location>
</feature>
<feature type="region of interest" description="Disordered" evidence="5">
    <location>
        <begin position="515"/>
        <end position="540"/>
    </location>
</feature>
<feature type="region of interest" description="Disordered" evidence="5">
    <location>
        <begin position="794"/>
        <end position="813"/>
    </location>
</feature>
<feature type="region of interest" description="G-loop" evidence="3">
    <location>
        <begin position="836"/>
        <end position="842"/>
    </location>
</feature>
<feature type="region of interest" description="Catalytic loop" evidence="3">
    <location>
        <begin position="964"/>
        <end position="972"/>
    </location>
</feature>
<feature type="region of interest" description="Activation loop" evidence="3">
    <location>
        <begin position="983"/>
        <end position="1007"/>
    </location>
</feature>
<feature type="compositionally biased region" description="Basic and acidic residues" evidence="5">
    <location>
        <begin position="394"/>
        <end position="404"/>
    </location>
</feature>
<feature type="compositionally biased region" description="Acidic residues" evidence="5">
    <location>
        <begin position="405"/>
        <end position="415"/>
    </location>
</feature>
<feature type="modified residue" description="Phosphoserine" evidence="2">
    <location>
        <position position="447"/>
    </location>
</feature>
<feature type="modified residue" description="Phosphoserine" evidence="2">
    <location>
        <position position="452"/>
    </location>
</feature>
<protein>
    <recommendedName>
        <fullName>Phosphatidylinositol 4-kinase beta 2</fullName>
        <shortName>PI4-kinase beta 2</shortName>
        <shortName>PtdIns-4-kinase beta 2</shortName>
        <ecNumber>2.7.1.67</ecNumber>
    </recommendedName>
    <alternativeName>
        <fullName>Phosphatidylinositol 4-OH kinase beta2</fullName>
        <shortName>AtPI4Kbeta2</shortName>
        <shortName>PI-4Kbeta2</shortName>
    </alternativeName>
</protein>
<proteinExistence type="evidence at transcript level"/>
<comment type="function">
    <text evidence="1 6 7 8 9">Acts on phosphatidylinositol (PtdIns) in the first committed step in the production of the second messenger inositol-1,4,5-trisphosphate (By similarity). Necessary for proper organization of the trans-Golgi network (TGN) and post-Golgi secretion in root hairs. Together with PI4KB1, required during polarized root hair expansion and pollen tube elongation. Functions redundantly with PI4KB1 upstream of the cold response phosphoinositide-dependent phospholipase C (PI-PLC) pathway.</text>
</comment>
<comment type="catalytic activity">
    <reaction>
        <text>a 1,2-diacyl-sn-glycero-3-phospho-(1D-myo-inositol) + ATP = a 1,2-diacyl-sn-glycero-3-phospho-(1D-myo-inositol 4-phosphate) + ADP + H(+)</text>
        <dbReference type="Rhea" id="RHEA:19877"/>
        <dbReference type="ChEBI" id="CHEBI:15378"/>
        <dbReference type="ChEBI" id="CHEBI:30616"/>
        <dbReference type="ChEBI" id="CHEBI:57880"/>
        <dbReference type="ChEBI" id="CHEBI:58178"/>
        <dbReference type="ChEBI" id="CHEBI:456216"/>
        <dbReference type="EC" id="2.7.1.67"/>
    </reaction>
</comment>
<comment type="subcellular location">
    <subcellularLocation>
        <location evidence="2">Cell membrane</location>
    </subcellularLocation>
    <subcellularLocation>
        <location evidence="2">Golgi apparatus</location>
        <location evidence="2">trans-Golgi network</location>
    </subcellularLocation>
    <subcellularLocation>
        <location evidence="2">Cytoplasmic vesicle membrane</location>
        <topology evidence="2">Peripheral membrane protein</topology>
        <orientation evidence="2">Cytoplasmic side</orientation>
    </subcellularLocation>
    <text evidence="2">Associated to tip-localized membranes in growing root hairs.</text>
</comment>
<comment type="domain">
    <text evidence="1">The PPC (Plant PI4K Charged) region is involved in membrane targeting and phospholipid binding.</text>
</comment>
<comment type="disruption phenotype">
    <text evidence="6 7">When associated with PI4KB1 disruption: aberrant root hair morphologies, and short and wavy pollen tubes.</text>
</comment>
<comment type="similarity">
    <text evidence="10">Belongs to the PI3/PI4-kinase family. Type III PI4K subfamily.</text>
</comment>
<comment type="sequence caution" evidence="10">
    <conflict type="erroneous gene model prediction">
        <sequence resource="EMBL-CDS" id="CAC05461"/>
    </conflict>
</comment>
<evidence type="ECO:0000250" key="1"/>
<evidence type="ECO:0000250" key="2">
    <source>
        <dbReference type="UniProtKB" id="Q9FMJ0"/>
    </source>
</evidence>
<evidence type="ECO:0000255" key="3">
    <source>
        <dbReference type="PROSITE-ProRule" id="PRU00269"/>
    </source>
</evidence>
<evidence type="ECO:0000255" key="4">
    <source>
        <dbReference type="PROSITE-ProRule" id="PRU00878"/>
    </source>
</evidence>
<evidence type="ECO:0000256" key="5">
    <source>
        <dbReference type="SAM" id="MobiDB-lite"/>
    </source>
</evidence>
<evidence type="ECO:0000269" key="6">
    <source>
    </source>
</evidence>
<evidence type="ECO:0000269" key="7">
    <source>
    </source>
</evidence>
<evidence type="ECO:0000269" key="8">
    <source>
    </source>
</evidence>
<evidence type="ECO:0000269" key="9">
    <source>
    </source>
</evidence>
<evidence type="ECO:0000305" key="10"/>
<name>P4KB2_ARATH</name>
<keyword id="KW-1003">Cell membrane</keyword>
<keyword id="KW-0968">Cytoplasmic vesicle</keyword>
<keyword id="KW-0217">Developmental protein</keyword>
<keyword id="KW-0333">Golgi apparatus</keyword>
<keyword id="KW-0418">Kinase</keyword>
<keyword id="KW-0472">Membrane</keyword>
<keyword id="KW-0597">Phosphoprotein</keyword>
<keyword id="KW-1185">Reference proteome</keyword>
<keyword id="KW-0677">Repeat</keyword>
<keyword id="KW-0808">Transferase</keyword>
<dbReference type="EC" id="2.7.1.67"/>
<dbReference type="EMBL" id="AL391712">
    <property type="protein sequence ID" value="CAC05461.1"/>
    <property type="status" value="ALT_SEQ"/>
    <property type="molecule type" value="Genomic_DNA"/>
</dbReference>
<dbReference type="EMBL" id="CP002688">
    <property type="protein sequence ID" value="AED91380.1"/>
    <property type="molecule type" value="Genomic_DNA"/>
</dbReference>
<dbReference type="EMBL" id="AK228931">
    <property type="protein sequence ID" value="BAF00820.1"/>
    <property type="molecule type" value="mRNA"/>
</dbReference>
<dbReference type="SMR" id="Q0WPX9"/>
<dbReference type="FunCoup" id="Q0WPX9">
    <property type="interactions" value="4167"/>
</dbReference>
<dbReference type="STRING" id="3702.Q0WPX9"/>
<dbReference type="GlyGen" id="Q0WPX9">
    <property type="glycosylation" value="1 site"/>
</dbReference>
<dbReference type="iPTMnet" id="Q0WPX9"/>
<dbReference type="PaxDb" id="3702-AT5G09350.1"/>
<dbReference type="ProteomicsDB" id="251326"/>
<dbReference type="EnsemblPlants" id="AT5G09350.1">
    <property type="protein sequence ID" value="AT5G09350.1"/>
    <property type="gene ID" value="AT5G09350"/>
</dbReference>
<dbReference type="GeneID" id="830794"/>
<dbReference type="Gramene" id="AT5G09350.1">
    <property type="protein sequence ID" value="AT5G09350.1"/>
    <property type="gene ID" value="AT5G09350"/>
</dbReference>
<dbReference type="KEGG" id="ath:AT5G09350"/>
<dbReference type="Araport" id="AT5G09350"/>
<dbReference type="TAIR" id="AT5G09350">
    <property type="gene designation" value="PI-4KBETA2"/>
</dbReference>
<dbReference type="eggNOG" id="KOG0903">
    <property type="taxonomic scope" value="Eukaryota"/>
</dbReference>
<dbReference type="HOGENOM" id="CLU_002446_4_1_1"/>
<dbReference type="InParanoid" id="Q0WPX9"/>
<dbReference type="OMA" id="DEEGHIM"/>
<dbReference type="OrthoDB" id="10264149at2759"/>
<dbReference type="PhylomeDB" id="Q0WPX9"/>
<dbReference type="BioCyc" id="ARA:AT5G09350-MONOMER"/>
<dbReference type="PRO" id="PR:Q0WPX9"/>
<dbReference type="Proteomes" id="UP000006548">
    <property type="component" value="Chromosome 5"/>
</dbReference>
<dbReference type="ExpressionAtlas" id="Q0WPX9">
    <property type="expression patterns" value="baseline and differential"/>
</dbReference>
<dbReference type="GO" id="GO:0030659">
    <property type="term" value="C:cytoplasmic vesicle membrane"/>
    <property type="evidence" value="ECO:0000250"/>
    <property type="project" value="UniProtKB"/>
</dbReference>
<dbReference type="GO" id="GO:0005794">
    <property type="term" value="C:Golgi apparatus"/>
    <property type="evidence" value="ECO:0007669"/>
    <property type="project" value="UniProtKB-SubCell"/>
</dbReference>
<dbReference type="GO" id="GO:0005886">
    <property type="term" value="C:plasma membrane"/>
    <property type="evidence" value="ECO:0007669"/>
    <property type="project" value="UniProtKB-SubCell"/>
</dbReference>
<dbReference type="GO" id="GO:0004430">
    <property type="term" value="F:1-phosphatidylinositol 4-kinase activity"/>
    <property type="evidence" value="ECO:0000250"/>
    <property type="project" value="UniProtKB"/>
</dbReference>
<dbReference type="GO" id="GO:0046854">
    <property type="term" value="P:phosphatidylinositol phosphate biosynthetic process"/>
    <property type="evidence" value="ECO:0007669"/>
    <property type="project" value="InterPro"/>
</dbReference>
<dbReference type="GO" id="GO:0009860">
    <property type="term" value="P:pollen tube growth"/>
    <property type="evidence" value="ECO:0000316"/>
    <property type="project" value="TAIR"/>
</dbReference>
<dbReference type="GO" id="GO:0048768">
    <property type="term" value="P:root hair cell tip growth"/>
    <property type="evidence" value="ECO:0000316"/>
    <property type="project" value="TAIR"/>
</dbReference>
<dbReference type="CDD" id="cd05168">
    <property type="entry name" value="PI4Kc_III_beta"/>
    <property type="match status" value="1"/>
</dbReference>
<dbReference type="FunFam" id="1.10.1070.11:FF:000019">
    <property type="entry name" value="Phosphatidylinositol 4-kinase beta 1"/>
    <property type="match status" value="1"/>
</dbReference>
<dbReference type="FunFam" id="3.30.1010.10:FF:000038">
    <property type="entry name" value="Phosphatidylinositol 4-kinase beta 1"/>
    <property type="match status" value="1"/>
</dbReference>
<dbReference type="Gene3D" id="1.10.1070.11">
    <property type="entry name" value="Phosphatidylinositol 3-/4-kinase, catalytic domain"/>
    <property type="match status" value="1"/>
</dbReference>
<dbReference type="Gene3D" id="3.30.1010.10">
    <property type="entry name" value="Phosphatidylinositol 3-kinase Catalytic Subunit, Chain A, domain 4"/>
    <property type="match status" value="1"/>
</dbReference>
<dbReference type="Gene3D" id="1.25.40.70">
    <property type="entry name" value="Phosphatidylinositol 3-kinase, accessory domain (PIK)"/>
    <property type="match status" value="1"/>
</dbReference>
<dbReference type="InterPro" id="IPR016024">
    <property type="entry name" value="ARM-type_fold"/>
</dbReference>
<dbReference type="InterPro" id="IPR011009">
    <property type="entry name" value="Kinase-like_dom_sf"/>
</dbReference>
<dbReference type="InterPro" id="IPR000403">
    <property type="entry name" value="PI3/4_kinase_cat_dom"/>
</dbReference>
<dbReference type="InterPro" id="IPR036940">
    <property type="entry name" value="PI3/4_kinase_cat_sf"/>
</dbReference>
<dbReference type="InterPro" id="IPR018936">
    <property type="entry name" value="PI3/4_kinase_CS"/>
</dbReference>
<dbReference type="InterPro" id="IPR001263">
    <property type="entry name" value="PI3K_accessory_dom"/>
</dbReference>
<dbReference type="InterPro" id="IPR042236">
    <property type="entry name" value="PI3K_accessory_sf"/>
</dbReference>
<dbReference type="InterPro" id="IPR049160">
    <property type="entry name" value="PI4KB-PIK1_PIK"/>
</dbReference>
<dbReference type="InterPro" id="IPR015433">
    <property type="entry name" value="PI_Kinase"/>
</dbReference>
<dbReference type="PANTHER" id="PTHR10048:SF22">
    <property type="entry name" value="PHOSPHATIDYLINOSITOL 4-KINASE BETA"/>
    <property type="match status" value="1"/>
</dbReference>
<dbReference type="PANTHER" id="PTHR10048">
    <property type="entry name" value="PHOSPHATIDYLINOSITOL KINASE"/>
    <property type="match status" value="1"/>
</dbReference>
<dbReference type="Pfam" id="PF00454">
    <property type="entry name" value="PI3_PI4_kinase"/>
    <property type="match status" value="1"/>
</dbReference>
<dbReference type="Pfam" id="PF21245">
    <property type="entry name" value="PI4KB-PIK1_PIK"/>
    <property type="match status" value="1"/>
</dbReference>
<dbReference type="SMART" id="SM00146">
    <property type="entry name" value="PI3Kc"/>
    <property type="match status" value="1"/>
</dbReference>
<dbReference type="SUPFAM" id="SSF48371">
    <property type="entry name" value="ARM repeat"/>
    <property type="match status" value="1"/>
</dbReference>
<dbReference type="SUPFAM" id="SSF56112">
    <property type="entry name" value="Protein kinase-like (PK-like)"/>
    <property type="match status" value="1"/>
</dbReference>
<dbReference type="PROSITE" id="PS00915">
    <property type="entry name" value="PI3_4_KINASE_1"/>
    <property type="match status" value="1"/>
</dbReference>
<dbReference type="PROSITE" id="PS00916">
    <property type="entry name" value="PI3_4_KINASE_2"/>
    <property type="match status" value="1"/>
</dbReference>
<dbReference type="PROSITE" id="PS50290">
    <property type="entry name" value="PI3_4_KINASE_3"/>
    <property type="match status" value="1"/>
</dbReference>
<dbReference type="PROSITE" id="PS51545">
    <property type="entry name" value="PIK_HELICAL"/>
    <property type="match status" value="1"/>
</dbReference>